<feature type="chain" id="PRO_1000013499" description="UPF0173 metal-dependent hydrolase BALH_4194">
    <location>
        <begin position="1"/>
        <end position="227"/>
    </location>
</feature>
<reference key="1">
    <citation type="journal article" date="2007" name="J. Bacteriol.">
        <title>The complete genome sequence of Bacillus thuringiensis Al Hakam.</title>
        <authorList>
            <person name="Challacombe J.F."/>
            <person name="Altherr M.R."/>
            <person name="Xie G."/>
            <person name="Bhotika S.S."/>
            <person name="Brown N."/>
            <person name="Bruce D."/>
            <person name="Campbell C.S."/>
            <person name="Campbell M.L."/>
            <person name="Chen J."/>
            <person name="Chertkov O."/>
            <person name="Cleland C."/>
            <person name="Dimitrijevic M."/>
            <person name="Doggett N.A."/>
            <person name="Fawcett J.J."/>
            <person name="Glavina T."/>
            <person name="Goodwin L.A."/>
            <person name="Green L.D."/>
            <person name="Han C.S."/>
            <person name="Hill K.K."/>
            <person name="Hitchcock P."/>
            <person name="Jackson P.J."/>
            <person name="Keim P."/>
            <person name="Kewalramani A.R."/>
            <person name="Longmire J."/>
            <person name="Lucas S."/>
            <person name="Malfatti S."/>
            <person name="Martinez D."/>
            <person name="McMurry K."/>
            <person name="Meincke L.J."/>
            <person name="Misra M."/>
            <person name="Moseman B.L."/>
            <person name="Mundt M."/>
            <person name="Munk A.C."/>
            <person name="Okinaka R.T."/>
            <person name="Parson-Quintana B."/>
            <person name="Reilly L.P."/>
            <person name="Richardson P."/>
            <person name="Robinson D.L."/>
            <person name="Saunders E."/>
            <person name="Tapia R."/>
            <person name="Tesmer J.G."/>
            <person name="Thayer N."/>
            <person name="Thompson L.S."/>
            <person name="Tice H."/>
            <person name="Ticknor L.O."/>
            <person name="Wills P.L."/>
            <person name="Gilna P."/>
            <person name="Brettin T.S."/>
        </authorList>
    </citation>
    <scope>NUCLEOTIDE SEQUENCE [LARGE SCALE GENOMIC DNA]</scope>
    <source>
        <strain>Al Hakam</strain>
    </source>
</reference>
<organism>
    <name type="scientific">Bacillus thuringiensis (strain Al Hakam)</name>
    <dbReference type="NCBI Taxonomy" id="412694"/>
    <lineage>
        <taxon>Bacteria</taxon>
        <taxon>Bacillati</taxon>
        <taxon>Bacillota</taxon>
        <taxon>Bacilli</taxon>
        <taxon>Bacillales</taxon>
        <taxon>Bacillaceae</taxon>
        <taxon>Bacillus</taxon>
        <taxon>Bacillus cereus group</taxon>
    </lineage>
</organism>
<sequence length="227" mass="24847">MKVSYHGHSVVKIETNGKVILIDPFLTGNSKTDLKAEDVKVDAILLSHGHGDHVGDTVELAKKNNAVVVAPFELATFLSWQGVNTHPMHIGGSHEFDFGKVKFTQAFHGSSYIDEENKTITYTGMPAGILFTAEEKTVYHAGDTALFSDMKLIGELNNIDVAFLPIGDNFTMGPEDAVLAAKWVQAKTVVPIHYNTFPVIEQDPYQFVEKLQNCTGKVLEAGESITL</sequence>
<keyword id="KW-0378">Hydrolase</keyword>
<protein>
    <recommendedName>
        <fullName evidence="1">UPF0173 metal-dependent hydrolase BALH_4194</fullName>
    </recommendedName>
</protein>
<comment type="similarity">
    <text evidence="1">Belongs to the UPF0173 family.</text>
</comment>
<dbReference type="EMBL" id="CP000485">
    <property type="protein sequence ID" value="ABK87401.1"/>
    <property type="molecule type" value="Genomic_DNA"/>
</dbReference>
<dbReference type="RefSeq" id="WP_000868952.1">
    <property type="nucleotide sequence ID" value="NC_008600.1"/>
</dbReference>
<dbReference type="SMR" id="A0RJK8"/>
<dbReference type="KEGG" id="btl:BALH_4194"/>
<dbReference type="HOGENOM" id="CLU_070010_4_1_9"/>
<dbReference type="GO" id="GO:0016787">
    <property type="term" value="F:hydrolase activity"/>
    <property type="evidence" value="ECO:0007669"/>
    <property type="project" value="UniProtKB-UniRule"/>
</dbReference>
<dbReference type="Gene3D" id="3.60.15.10">
    <property type="entry name" value="Ribonuclease Z/Hydroxyacylglutathione hydrolase-like"/>
    <property type="match status" value="1"/>
</dbReference>
<dbReference type="HAMAP" id="MF_00457">
    <property type="entry name" value="UPF0173"/>
    <property type="match status" value="1"/>
</dbReference>
<dbReference type="InterPro" id="IPR001279">
    <property type="entry name" value="Metallo-B-lactamas"/>
</dbReference>
<dbReference type="InterPro" id="IPR036866">
    <property type="entry name" value="RibonucZ/Hydroxyglut_hydro"/>
</dbReference>
<dbReference type="InterPro" id="IPR022877">
    <property type="entry name" value="UPF0173"/>
</dbReference>
<dbReference type="InterPro" id="IPR050114">
    <property type="entry name" value="UPF0173_UPF0282_UlaG_hydrolase"/>
</dbReference>
<dbReference type="NCBIfam" id="NF001911">
    <property type="entry name" value="PRK00685.1"/>
    <property type="match status" value="1"/>
</dbReference>
<dbReference type="PANTHER" id="PTHR43546:SF3">
    <property type="entry name" value="UPF0173 METAL-DEPENDENT HYDROLASE MJ1163"/>
    <property type="match status" value="1"/>
</dbReference>
<dbReference type="PANTHER" id="PTHR43546">
    <property type="entry name" value="UPF0173 METAL-DEPENDENT HYDROLASE MJ1163-RELATED"/>
    <property type="match status" value="1"/>
</dbReference>
<dbReference type="Pfam" id="PF12706">
    <property type="entry name" value="Lactamase_B_2"/>
    <property type="match status" value="1"/>
</dbReference>
<dbReference type="SMART" id="SM00849">
    <property type="entry name" value="Lactamase_B"/>
    <property type="match status" value="1"/>
</dbReference>
<dbReference type="SUPFAM" id="SSF56281">
    <property type="entry name" value="Metallo-hydrolase/oxidoreductase"/>
    <property type="match status" value="1"/>
</dbReference>
<gene>
    <name type="ordered locus">BALH_4194</name>
</gene>
<accession>A0RJK8</accession>
<proteinExistence type="inferred from homology"/>
<name>Y4194_BACAH</name>
<evidence type="ECO:0000255" key="1">
    <source>
        <dbReference type="HAMAP-Rule" id="MF_00457"/>
    </source>
</evidence>